<accession>Q32RL7</accession>
<dbReference type="EMBL" id="AY958086">
    <property type="protein sequence ID" value="AAX45833.1"/>
    <property type="molecule type" value="Genomic_DNA"/>
</dbReference>
<dbReference type="RefSeq" id="YP_636509.1">
    <property type="nucleotide sequence ID" value="NC_008117.1"/>
</dbReference>
<dbReference type="SMR" id="Q32RL7"/>
<dbReference type="GeneID" id="4108153"/>
<dbReference type="GO" id="GO:0009535">
    <property type="term" value="C:chloroplast thylakoid membrane"/>
    <property type="evidence" value="ECO:0007669"/>
    <property type="project" value="UniProtKB-SubCell"/>
</dbReference>
<dbReference type="GO" id="GO:0009522">
    <property type="term" value="C:photosystem I"/>
    <property type="evidence" value="ECO:0007669"/>
    <property type="project" value="UniProtKB-KW"/>
</dbReference>
<dbReference type="GO" id="GO:0015979">
    <property type="term" value="P:photosynthesis"/>
    <property type="evidence" value="ECO:0007669"/>
    <property type="project" value="UniProtKB-UniRule"/>
</dbReference>
<dbReference type="HAMAP" id="MF_00431">
    <property type="entry name" value="PSI_PsaI"/>
    <property type="match status" value="1"/>
</dbReference>
<dbReference type="InterPro" id="IPR001302">
    <property type="entry name" value="PSI_PsaI"/>
</dbReference>
<dbReference type="InterPro" id="IPR036357">
    <property type="entry name" value="PSI_PsaI_sf"/>
</dbReference>
<dbReference type="NCBIfam" id="NF008830">
    <property type="entry name" value="PRK11877.1"/>
    <property type="match status" value="1"/>
</dbReference>
<dbReference type="NCBIfam" id="TIGR03052">
    <property type="entry name" value="PS_I_psaI"/>
    <property type="match status" value="1"/>
</dbReference>
<dbReference type="PANTHER" id="PTHR35775">
    <property type="match status" value="1"/>
</dbReference>
<dbReference type="PANTHER" id="PTHR35775:SF2">
    <property type="entry name" value="PHOTOSYSTEM I REACTION CENTER SUBUNIT VIII"/>
    <property type="match status" value="1"/>
</dbReference>
<dbReference type="Pfam" id="PF00796">
    <property type="entry name" value="PSI_8"/>
    <property type="match status" value="1"/>
</dbReference>
<dbReference type="SUPFAM" id="SSF81540">
    <property type="entry name" value="Subunit VIII of photosystem I reaction centre, PsaI"/>
    <property type="match status" value="1"/>
</dbReference>
<protein>
    <recommendedName>
        <fullName evidence="1">Photosystem I reaction center subunit VIII</fullName>
        <shortName evidence="1">PSI-I</shortName>
    </recommendedName>
</protein>
<organism>
    <name type="scientific">Zygnema circumcarinatum</name>
    <name type="common">Green alga</name>
    <dbReference type="NCBI Taxonomy" id="35869"/>
    <lineage>
        <taxon>Eukaryota</taxon>
        <taxon>Viridiplantae</taxon>
        <taxon>Streptophyta</taxon>
        <taxon>Zygnematophyceae</taxon>
        <taxon>Zygnematophycidae</taxon>
        <taxon>Zygnematales</taxon>
        <taxon>Zygnemataceae</taxon>
        <taxon>Zygnema</taxon>
    </lineage>
</organism>
<feature type="chain" id="PRO_0000276043" description="Photosystem I reaction center subunit VIII">
    <location>
        <begin position="1"/>
        <end position="36"/>
    </location>
</feature>
<feature type="transmembrane region" description="Helical" evidence="1">
    <location>
        <begin position="9"/>
        <end position="29"/>
    </location>
</feature>
<name>PSAI_ZYGCR</name>
<proteinExistence type="inferred from homology"/>
<evidence type="ECO:0000255" key="1">
    <source>
        <dbReference type="HAMAP-Rule" id="MF_00431"/>
    </source>
</evidence>
<geneLocation type="chloroplast"/>
<sequence length="36" mass="3970">MSASYLPSILVPLVGLVFPAITMVSLFLYIEQDEIV</sequence>
<gene>
    <name evidence="1" type="primary">psaI</name>
</gene>
<reference key="1">
    <citation type="journal article" date="2005" name="BMC Biol.">
        <title>The complete chloroplast DNA sequences of the charophycean green algae Staurastrum and Zygnema reveal that the chloroplast genome underwent extensive changes during the evolution of the Zygnematales.</title>
        <authorList>
            <person name="Turmel M."/>
            <person name="Otis C."/>
            <person name="Lemieux C."/>
        </authorList>
    </citation>
    <scope>NUCLEOTIDE SEQUENCE [LARGE SCALE GENOMIC DNA]</scope>
</reference>
<keyword id="KW-0150">Chloroplast</keyword>
<keyword id="KW-0472">Membrane</keyword>
<keyword id="KW-0602">Photosynthesis</keyword>
<keyword id="KW-0603">Photosystem I</keyword>
<keyword id="KW-0934">Plastid</keyword>
<keyword id="KW-0793">Thylakoid</keyword>
<keyword id="KW-0812">Transmembrane</keyword>
<keyword id="KW-1133">Transmembrane helix</keyword>
<comment type="function">
    <text evidence="1">May help in the organization of the PsaL subunit.</text>
</comment>
<comment type="subcellular location">
    <subcellularLocation>
        <location evidence="1">Plastid</location>
        <location evidence="1">Chloroplast thylakoid membrane</location>
        <topology evidence="1">Single-pass membrane protein</topology>
    </subcellularLocation>
</comment>
<comment type="similarity">
    <text evidence="1">Belongs to the PsaI family.</text>
</comment>